<gene>
    <name evidence="1" type="primary">rps8e</name>
    <name type="ordered locus">Hlac_1967</name>
</gene>
<sequence length="123" mass="13381">MKDQGRSTRKRTGGRLKHASNKKRHQLGREPAETTVGETRVQYIDSRGNEKKVRALSTNVAQVADGDAVSEAEIENVVDNPSNVNYARRNIITKGAIIETSAGRARVSSRPGQTGQVNAVLID</sequence>
<keyword id="KW-1185">Reference proteome</keyword>
<keyword id="KW-0687">Ribonucleoprotein</keyword>
<keyword id="KW-0689">Ribosomal protein</keyword>
<feature type="chain" id="PRO_1000116913" description="Small ribosomal subunit protein eS8">
    <location>
        <begin position="1"/>
        <end position="123"/>
    </location>
</feature>
<feature type="region of interest" description="Disordered" evidence="2">
    <location>
        <begin position="1"/>
        <end position="37"/>
    </location>
</feature>
<feature type="compositionally biased region" description="Basic residues" evidence="2">
    <location>
        <begin position="7"/>
        <end position="26"/>
    </location>
</feature>
<accession>B9LQC4</accession>
<comment type="subunit">
    <text evidence="1">Part of the 30S ribosomal subunit.</text>
</comment>
<comment type="similarity">
    <text evidence="1">Belongs to the eukaryotic ribosomal protein eS8 family.</text>
</comment>
<organism>
    <name type="scientific">Halorubrum lacusprofundi (strain ATCC 49239 / DSM 5036 / JCM 8891 / ACAM 34)</name>
    <dbReference type="NCBI Taxonomy" id="416348"/>
    <lineage>
        <taxon>Archaea</taxon>
        <taxon>Methanobacteriati</taxon>
        <taxon>Methanobacteriota</taxon>
        <taxon>Stenosarchaea group</taxon>
        <taxon>Halobacteria</taxon>
        <taxon>Halobacteriales</taxon>
        <taxon>Haloferacaceae</taxon>
        <taxon>Halorubrum</taxon>
    </lineage>
</organism>
<dbReference type="EMBL" id="CP001365">
    <property type="protein sequence ID" value="ACM57545.1"/>
    <property type="molecule type" value="Genomic_DNA"/>
</dbReference>
<dbReference type="RefSeq" id="WP_015910670.1">
    <property type="nucleotide sequence ID" value="NC_012029.1"/>
</dbReference>
<dbReference type="SMR" id="B9LQC4"/>
<dbReference type="GeneID" id="7399919"/>
<dbReference type="KEGG" id="hla:Hlac_1967"/>
<dbReference type="eggNOG" id="arCOG04154">
    <property type="taxonomic scope" value="Archaea"/>
</dbReference>
<dbReference type="HOGENOM" id="CLU_080597_2_1_2"/>
<dbReference type="Proteomes" id="UP000000740">
    <property type="component" value="Chromosome 1"/>
</dbReference>
<dbReference type="GO" id="GO:1990904">
    <property type="term" value="C:ribonucleoprotein complex"/>
    <property type="evidence" value="ECO:0007669"/>
    <property type="project" value="UniProtKB-KW"/>
</dbReference>
<dbReference type="GO" id="GO:0005840">
    <property type="term" value="C:ribosome"/>
    <property type="evidence" value="ECO:0007669"/>
    <property type="project" value="UniProtKB-KW"/>
</dbReference>
<dbReference type="GO" id="GO:0003735">
    <property type="term" value="F:structural constituent of ribosome"/>
    <property type="evidence" value="ECO:0007669"/>
    <property type="project" value="InterPro"/>
</dbReference>
<dbReference type="GO" id="GO:0006412">
    <property type="term" value="P:translation"/>
    <property type="evidence" value="ECO:0007669"/>
    <property type="project" value="UniProtKB-UniRule"/>
</dbReference>
<dbReference type="CDD" id="cd11382">
    <property type="entry name" value="Ribosomal_S8e"/>
    <property type="match status" value="1"/>
</dbReference>
<dbReference type="Gene3D" id="2.40.10.310">
    <property type="match status" value="1"/>
</dbReference>
<dbReference type="HAMAP" id="MF_00029">
    <property type="entry name" value="Ribosomal_eS8"/>
    <property type="match status" value="1"/>
</dbReference>
<dbReference type="InterPro" id="IPR001047">
    <property type="entry name" value="Ribosomal_eS8"/>
</dbReference>
<dbReference type="InterPro" id="IPR020919">
    <property type="entry name" value="Ribosomal_protein_eS8_arc"/>
</dbReference>
<dbReference type="InterPro" id="IPR022309">
    <property type="entry name" value="Ribosomal_Se8/biogenesis_NSA2"/>
</dbReference>
<dbReference type="NCBIfam" id="TIGR00307">
    <property type="entry name" value="eS8"/>
    <property type="match status" value="1"/>
</dbReference>
<dbReference type="PANTHER" id="PTHR10394">
    <property type="entry name" value="40S RIBOSOMAL PROTEIN S8"/>
    <property type="match status" value="1"/>
</dbReference>
<dbReference type="Pfam" id="PF01201">
    <property type="entry name" value="Ribosomal_S8e"/>
    <property type="match status" value="1"/>
</dbReference>
<protein>
    <recommendedName>
        <fullName evidence="1">Small ribosomal subunit protein eS8</fullName>
    </recommendedName>
    <alternativeName>
        <fullName evidence="3">30S ribosomal protein S8e</fullName>
    </alternativeName>
</protein>
<proteinExistence type="inferred from homology"/>
<evidence type="ECO:0000255" key="1">
    <source>
        <dbReference type="HAMAP-Rule" id="MF_00029"/>
    </source>
</evidence>
<evidence type="ECO:0000256" key="2">
    <source>
        <dbReference type="SAM" id="MobiDB-lite"/>
    </source>
</evidence>
<evidence type="ECO:0000305" key="3"/>
<reference key="1">
    <citation type="journal article" date="2016" name="Stand. Genomic Sci.">
        <title>Complete genome sequence of the Antarctic Halorubrum lacusprofundi type strain ACAM 34.</title>
        <authorList>
            <person name="Anderson I.J."/>
            <person name="DasSarma P."/>
            <person name="Lucas S."/>
            <person name="Copeland A."/>
            <person name="Lapidus A."/>
            <person name="Del Rio T.G."/>
            <person name="Tice H."/>
            <person name="Dalin E."/>
            <person name="Bruce D.C."/>
            <person name="Goodwin L."/>
            <person name="Pitluck S."/>
            <person name="Sims D."/>
            <person name="Brettin T.S."/>
            <person name="Detter J.C."/>
            <person name="Han C.S."/>
            <person name="Larimer F."/>
            <person name="Hauser L."/>
            <person name="Land M."/>
            <person name="Ivanova N."/>
            <person name="Richardson P."/>
            <person name="Cavicchioli R."/>
            <person name="DasSarma S."/>
            <person name="Woese C.R."/>
            <person name="Kyrpides N.C."/>
        </authorList>
    </citation>
    <scope>NUCLEOTIDE SEQUENCE [LARGE SCALE GENOMIC DNA]</scope>
    <source>
        <strain>ATCC 49239 / DSM 5036 / JCM 8891 / ACAM 34</strain>
    </source>
</reference>
<name>RS8E_HALLT</name>